<proteinExistence type="evidence at transcript level"/>
<feature type="chain" id="PRO_0000086854" description="Laminin subunit beta-1 variant">
    <location>
        <begin position="1" status="less than"/>
        <end position="198" status="greater than"/>
    </location>
</feature>
<feature type="domain" description="Laminin N-terminal" evidence="1">
    <location>
        <begin position="83"/>
        <end position="198" status="greater than"/>
    </location>
</feature>
<feature type="region of interest" description="Disordered" evidence="2">
    <location>
        <begin position="1"/>
        <end position="64"/>
    </location>
</feature>
<feature type="compositionally biased region" description="Basic and acidic residues" evidence="2">
    <location>
        <begin position="23"/>
        <end position="38"/>
    </location>
</feature>
<feature type="compositionally biased region" description="Pro residues" evidence="2">
    <location>
        <begin position="45"/>
        <end position="61"/>
    </location>
</feature>
<feature type="non-terminal residue">
    <location>
        <position position="1"/>
    </location>
</feature>
<feature type="non-terminal residue">
    <location>
        <position position="198"/>
    </location>
</feature>
<accession>Q01636</accession>
<dbReference type="EMBL" id="L00963">
    <property type="protein sequence ID" value="AAA49140.1"/>
    <property type="molecule type" value="mRNA"/>
</dbReference>
<dbReference type="PIR" id="A45067">
    <property type="entry name" value="A45067"/>
</dbReference>
<dbReference type="SMR" id="Q01636"/>
<dbReference type="GlyGen" id="Q01636">
    <property type="glycosylation" value="2 sites"/>
</dbReference>
<dbReference type="VEuPathDB" id="HostDB:geneid_373980"/>
<dbReference type="InParanoid" id="Q01636"/>
<dbReference type="PhylomeDB" id="Q01636"/>
<dbReference type="Proteomes" id="UP000000539">
    <property type="component" value="Unassembled WGS sequence"/>
</dbReference>
<dbReference type="GO" id="GO:0005604">
    <property type="term" value="C:basement membrane"/>
    <property type="evidence" value="ECO:0007669"/>
    <property type="project" value="UniProtKB-SubCell"/>
</dbReference>
<dbReference type="GO" id="GO:0005576">
    <property type="term" value="C:extracellular region"/>
    <property type="evidence" value="ECO:0007669"/>
    <property type="project" value="UniProtKB-KW"/>
</dbReference>
<dbReference type="GO" id="GO:0007155">
    <property type="term" value="P:cell adhesion"/>
    <property type="evidence" value="ECO:0007669"/>
    <property type="project" value="UniProtKB-KW"/>
</dbReference>
<dbReference type="Gene3D" id="2.60.120.260">
    <property type="entry name" value="Galactose-binding domain-like"/>
    <property type="match status" value="1"/>
</dbReference>
<dbReference type="InterPro" id="IPR050440">
    <property type="entry name" value="Laminin/Netrin_ECM"/>
</dbReference>
<dbReference type="InterPro" id="IPR008211">
    <property type="entry name" value="Laminin_N"/>
</dbReference>
<dbReference type="PANTHER" id="PTHR10574:SF36">
    <property type="entry name" value="LAMININ SUBUNIT BETA-2"/>
    <property type="match status" value="1"/>
</dbReference>
<dbReference type="PANTHER" id="PTHR10574">
    <property type="entry name" value="NETRIN/LAMININ-RELATED"/>
    <property type="match status" value="1"/>
</dbReference>
<dbReference type="Pfam" id="PF00055">
    <property type="entry name" value="Laminin_N"/>
    <property type="match status" value="1"/>
</dbReference>
<dbReference type="SMART" id="SM00136">
    <property type="entry name" value="LamNT"/>
    <property type="match status" value="1"/>
</dbReference>
<dbReference type="PROSITE" id="PS51117">
    <property type="entry name" value="LAMININ_NTER"/>
    <property type="match status" value="1"/>
</dbReference>
<protein>
    <recommendedName>
        <fullName>Laminin subunit beta-1 variant</fullName>
    </recommendedName>
    <alternativeName>
        <fullName>Laminin beta-1-2 chain</fullName>
    </alternativeName>
</protein>
<name>LAMBV_CHICK</name>
<sequence length="198" mass="21830">AATTLRRGGGREPTPPATPPTHARPDPTRRHPDPESRAPPHARPRSPPPPAPSPPPLPPRPAAVRAGRDRVGRVFSRLPPGCAAGSCYPATGDLLVGRAPRLSASSTCGLRRPQPYCIVSHLQEEKKCFICDSRRPYDARSNTDSHRIENVLTTFAPRPKKAWWQAENGVEHVSIQLDLEAEFHFTHLIMTFKTFRPA</sequence>
<comment type="function">
    <text>Binding to cells via a high affinity receptor, laminin is thought to mediate the attachment, migration and organization of cells into tissues during embryonic development by interacting with other extracellular matrix components.</text>
</comment>
<comment type="subunit">
    <text>Laminin is a complex glycoprotein, consisting of three different polypeptide chains (alpha, beta, gamma), which are bound to each other by disulfide bonds into a cross-shaped molecule comprising one long and three short arms with globules at each end.</text>
</comment>
<comment type="subcellular location">
    <subcellularLocation>
        <location>Secreted</location>
        <location>Extracellular space</location>
        <location>Extracellular matrix</location>
        <location>Basement membrane</location>
    </subcellularLocation>
    <text>Major component.</text>
</comment>
<evidence type="ECO:0000255" key="1">
    <source>
        <dbReference type="PROSITE-ProRule" id="PRU00466"/>
    </source>
</evidence>
<evidence type="ECO:0000256" key="2">
    <source>
        <dbReference type="SAM" id="MobiDB-lite"/>
    </source>
</evidence>
<keyword id="KW-0084">Basement membrane</keyword>
<keyword id="KW-0130">Cell adhesion</keyword>
<keyword id="KW-1015">Disulfide bond</keyword>
<keyword id="KW-0272">Extracellular matrix</keyword>
<keyword id="KW-0424">Laminin EGF-like domain</keyword>
<keyword id="KW-1185">Reference proteome</keyword>
<keyword id="KW-0964">Secreted</keyword>
<reference key="1">
    <citation type="journal article" date="1992" name="J. Biol. Chem.">
        <title>A novel laminin B1 chain variant in avian eye.</title>
        <authorList>
            <person name="O'Rear J.J."/>
        </authorList>
    </citation>
    <scope>NUCLEOTIDE SEQUENCE [MRNA]</scope>
    <source>
        <tissue>Eye</tissue>
    </source>
</reference>
<organism>
    <name type="scientific">Gallus gallus</name>
    <name type="common">Chicken</name>
    <dbReference type="NCBI Taxonomy" id="9031"/>
    <lineage>
        <taxon>Eukaryota</taxon>
        <taxon>Metazoa</taxon>
        <taxon>Chordata</taxon>
        <taxon>Craniata</taxon>
        <taxon>Vertebrata</taxon>
        <taxon>Euteleostomi</taxon>
        <taxon>Archelosauria</taxon>
        <taxon>Archosauria</taxon>
        <taxon>Dinosauria</taxon>
        <taxon>Saurischia</taxon>
        <taxon>Theropoda</taxon>
        <taxon>Coelurosauria</taxon>
        <taxon>Aves</taxon>
        <taxon>Neognathae</taxon>
        <taxon>Galloanserae</taxon>
        <taxon>Galliformes</taxon>
        <taxon>Phasianidae</taxon>
        <taxon>Phasianinae</taxon>
        <taxon>Gallus</taxon>
    </lineage>
</organism>